<reference key="1">
    <citation type="journal article" date="2003" name="Nat. Genet.">
        <title>Comparative analysis of the genome sequences of Bordetella pertussis, Bordetella parapertussis and Bordetella bronchiseptica.</title>
        <authorList>
            <person name="Parkhill J."/>
            <person name="Sebaihia M."/>
            <person name="Preston A."/>
            <person name="Murphy L.D."/>
            <person name="Thomson N.R."/>
            <person name="Harris D.E."/>
            <person name="Holden M.T.G."/>
            <person name="Churcher C.M."/>
            <person name="Bentley S.D."/>
            <person name="Mungall K.L."/>
            <person name="Cerdeno-Tarraga A.-M."/>
            <person name="Temple L."/>
            <person name="James K.D."/>
            <person name="Harris B."/>
            <person name="Quail M.A."/>
            <person name="Achtman M."/>
            <person name="Atkin R."/>
            <person name="Baker S."/>
            <person name="Basham D."/>
            <person name="Bason N."/>
            <person name="Cherevach I."/>
            <person name="Chillingworth T."/>
            <person name="Collins M."/>
            <person name="Cronin A."/>
            <person name="Davis P."/>
            <person name="Doggett J."/>
            <person name="Feltwell T."/>
            <person name="Goble A."/>
            <person name="Hamlin N."/>
            <person name="Hauser H."/>
            <person name="Holroyd S."/>
            <person name="Jagels K."/>
            <person name="Leather S."/>
            <person name="Moule S."/>
            <person name="Norberczak H."/>
            <person name="O'Neil S."/>
            <person name="Ormond D."/>
            <person name="Price C."/>
            <person name="Rabbinowitsch E."/>
            <person name="Rutter S."/>
            <person name="Sanders M."/>
            <person name="Saunders D."/>
            <person name="Seeger K."/>
            <person name="Sharp S."/>
            <person name="Simmonds M."/>
            <person name="Skelton J."/>
            <person name="Squares R."/>
            <person name="Squares S."/>
            <person name="Stevens K."/>
            <person name="Unwin L."/>
            <person name="Whitehead S."/>
            <person name="Barrell B.G."/>
            <person name="Maskell D.J."/>
        </authorList>
    </citation>
    <scope>NUCLEOTIDE SEQUENCE [LARGE SCALE GENOMIC DNA]</scope>
    <source>
        <strain>ATCC BAA-588 / NCTC 13252 / RB50</strain>
    </source>
</reference>
<name>ARLY_BORBR</name>
<dbReference type="EC" id="4.3.2.1" evidence="1"/>
<dbReference type="EMBL" id="BX640444">
    <property type="protein sequence ID" value="CAE33001.1"/>
    <property type="molecule type" value="Genomic_DNA"/>
</dbReference>
<dbReference type="RefSeq" id="WP_003812010.1">
    <property type="nucleotide sequence ID" value="NC_002927.3"/>
</dbReference>
<dbReference type="SMR" id="Q7WJI7"/>
<dbReference type="GeneID" id="93203192"/>
<dbReference type="KEGG" id="bbr:BB2507"/>
<dbReference type="eggNOG" id="COG0165">
    <property type="taxonomic scope" value="Bacteria"/>
</dbReference>
<dbReference type="HOGENOM" id="CLU_027272_2_3_4"/>
<dbReference type="UniPathway" id="UPA00068">
    <property type="reaction ID" value="UER00114"/>
</dbReference>
<dbReference type="Proteomes" id="UP000001027">
    <property type="component" value="Chromosome"/>
</dbReference>
<dbReference type="GO" id="GO:0005829">
    <property type="term" value="C:cytosol"/>
    <property type="evidence" value="ECO:0007669"/>
    <property type="project" value="TreeGrafter"/>
</dbReference>
<dbReference type="GO" id="GO:0004056">
    <property type="term" value="F:argininosuccinate lyase activity"/>
    <property type="evidence" value="ECO:0007669"/>
    <property type="project" value="UniProtKB-UniRule"/>
</dbReference>
<dbReference type="GO" id="GO:0042450">
    <property type="term" value="P:arginine biosynthetic process via ornithine"/>
    <property type="evidence" value="ECO:0007669"/>
    <property type="project" value="InterPro"/>
</dbReference>
<dbReference type="GO" id="GO:0006526">
    <property type="term" value="P:L-arginine biosynthetic process"/>
    <property type="evidence" value="ECO:0007669"/>
    <property type="project" value="UniProtKB-UniRule"/>
</dbReference>
<dbReference type="CDD" id="cd01359">
    <property type="entry name" value="Argininosuccinate_lyase"/>
    <property type="match status" value="1"/>
</dbReference>
<dbReference type="FunFam" id="1.10.275.10:FF:000002">
    <property type="entry name" value="Argininosuccinate lyase"/>
    <property type="match status" value="1"/>
</dbReference>
<dbReference type="FunFam" id="1.10.40.30:FF:000001">
    <property type="entry name" value="Argininosuccinate lyase"/>
    <property type="match status" value="1"/>
</dbReference>
<dbReference type="FunFam" id="1.20.200.10:FF:000015">
    <property type="entry name" value="argininosuccinate lyase isoform X2"/>
    <property type="match status" value="1"/>
</dbReference>
<dbReference type="Gene3D" id="1.10.40.30">
    <property type="entry name" value="Fumarase/aspartase (C-terminal domain)"/>
    <property type="match status" value="1"/>
</dbReference>
<dbReference type="Gene3D" id="1.20.200.10">
    <property type="entry name" value="Fumarase/aspartase (Central domain)"/>
    <property type="match status" value="1"/>
</dbReference>
<dbReference type="Gene3D" id="1.10.275.10">
    <property type="entry name" value="Fumarase/aspartase (N-terminal domain)"/>
    <property type="match status" value="1"/>
</dbReference>
<dbReference type="HAMAP" id="MF_00006">
    <property type="entry name" value="Arg_succ_lyase"/>
    <property type="match status" value="1"/>
</dbReference>
<dbReference type="InterPro" id="IPR029419">
    <property type="entry name" value="Arg_succ_lyase_C"/>
</dbReference>
<dbReference type="InterPro" id="IPR009049">
    <property type="entry name" value="Argininosuccinate_lyase"/>
</dbReference>
<dbReference type="InterPro" id="IPR024083">
    <property type="entry name" value="Fumarase/histidase_N"/>
</dbReference>
<dbReference type="InterPro" id="IPR020557">
    <property type="entry name" value="Fumarate_lyase_CS"/>
</dbReference>
<dbReference type="InterPro" id="IPR000362">
    <property type="entry name" value="Fumarate_lyase_fam"/>
</dbReference>
<dbReference type="InterPro" id="IPR022761">
    <property type="entry name" value="Fumarate_lyase_N"/>
</dbReference>
<dbReference type="InterPro" id="IPR008948">
    <property type="entry name" value="L-Aspartase-like"/>
</dbReference>
<dbReference type="NCBIfam" id="TIGR00838">
    <property type="entry name" value="argH"/>
    <property type="match status" value="1"/>
</dbReference>
<dbReference type="PANTHER" id="PTHR43814">
    <property type="entry name" value="ARGININOSUCCINATE LYASE"/>
    <property type="match status" value="1"/>
</dbReference>
<dbReference type="PANTHER" id="PTHR43814:SF1">
    <property type="entry name" value="ARGININOSUCCINATE LYASE"/>
    <property type="match status" value="1"/>
</dbReference>
<dbReference type="Pfam" id="PF14698">
    <property type="entry name" value="ASL_C2"/>
    <property type="match status" value="1"/>
</dbReference>
<dbReference type="Pfam" id="PF00206">
    <property type="entry name" value="Lyase_1"/>
    <property type="match status" value="1"/>
</dbReference>
<dbReference type="PRINTS" id="PR00145">
    <property type="entry name" value="ARGSUCLYASE"/>
</dbReference>
<dbReference type="PRINTS" id="PR00149">
    <property type="entry name" value="FUMRATELYASE"/>
</dbReference>
<dbReference type="SUPFAM" id="SSF48557">
    <property type="entry name" value="L-aspartase-like"/>
    <property type="match status" value="1"/>
</dbReference>
<dbReference type="PROSITE" id="PS00163">
    <property type="entry name" value="FUMARATE_LYASES"/>
    <property type="match status" value="1"/>
</dbReference>
<accession>Q7WJI7</accession>
<keyword id="KW-0028">Amino-acid biosynthesis</keyword>
<keyword id="KW-0055">Arginine biosynthesis</keyword>
<keyword id="KW-0963">Cytoplasm</keyword>
<keyword id="KW-0456">Lyase</keyword>
<organism>
    <name type="scientific">Bordetella bronchiseptica (strain ATCC BAA-588 / NCTC 13252 / RB50)</name>
    <name type="common">Alcaligenes bronchisepticus</name>
    <dbReference type="NCBI Taxonomy" id="257310"/>
    <lineage>
        <taxon>Bacteria</taxon>
        <taxon>Pseudomonadati</taxon>
        <taxon>Pseudomonadota</taxon>
        <taxon>Betaproteobacteria</taxon>
        <taxon>Burkholderiales</taxon>
        <taxon>Alcaligenaceae</taxon>
        <taxon>Bordetella</taxon>
    </lineage>
</organism>
<proteinExistence type="inferred from homology"/>
<sequence length="473" mass="52004">MANTSHSSQDQFANKAQAWSARFSEPVSDLVKRYTASVDFDKRMARHDIRGSLAHADMLAAQGIISAQDLADIQRGMQQILSEIDAGSFQWLLDLEDVHLNIEKRLVELVGDAGKRLHTGRSRNDQVATDIRLWLRDEIDTLVDLLRQLRHALATVALENAATIMPGFTHLQVAQPVTFGHHLLAYAEMFGRDAERLADCRRRVNRLPLGAAALAGTSYPIDRERVARTLGFDGVCRNSLDAVSDRDFGIEFCAAGALIMTHISRLSEELVLWMSPRVGFIDLADRFCTGSSIMPQKKNPDVPELARGKTGRVNGHLVALLTLMKGQPLAYNKDNQEDKEGLFDTADTLRDTLTIFADMAGGIKVKADNMRAAALQGFATATDLADYLVKRGLPFRDAHEIVAHAVRDCEQRGCDLADLSLADLQAYHPSIGEDIHQVLTLEGSVAARKHIGGTAPERVREEAQRVLAETAGA</sequence>
<protein>
    <recommendedName>
        <fullName evidence="1">Argininosuccinate lyase</fullName>
        <shortName evidence="1">ASAL</shortName>
        <ecNumber evidence="1">4.3.2.1</ecNumber>
    </recommendedName>
    <alternativeName>
        <fullName evidence="1">Arginosuccinase</fullName>
    </alternativeName>
</protein>
<feature type="chain" id="PRO_0000137742" description="Argininosuccinate lyase">
    <location>
        <begin position="1"/>
        <end position="473"/>
    </location>
</feature>
<evidence type="ECO:0000255" key="1">
    <source>
        <dbReference type="HAMAP-Rule" id="MF_00006"/>
    </source>
</evidence>
<comment type="catalytic activity">
    <reaction evidence="1">
        <text>2-(N(omega)-L-arginino)succinate = fumarate + L-arginine</text>
        <dbReference type="Rhea" id="RHEA:24020"/>
        <dbReference type="ChEBI" id="CHEBI:29806"/>
        <dbReference type="ChEBI" id="CHEBI:32682"/>
        <dbReference type="ChEBI" id="CHEBI:57472"/>
        <dbReference type="EC" id="4.3.2.1"/>
    </reaction>
</comment>
<comment type="pathway">
    <text evidence="1">Amino-acid biosynthesis; L-arginine biosynthesis; L-arginine from L-ornithine and carbamoyl phosphate: step 3/3.</text>
</comment>
<comment type="subcellular location">
    <subcellularLocation>
        <location evidence="1">Cytoplasm</location>
    </subcellularLocation>
</comment>
<comment type="similarity">
    <text evidence="1">Belongs to the lyase 1 family. Argininosuccinate lyase subfamily.</text>
</comment>
<gene>
    <name evidence="1" type="primary">argH</name>
    <name type="ordered locus">BB2507</name>
</gene>